<gene>
    <name evidence="1" type="primary">rplO</name>
    <name type="ordered locus">Lcho_3930</name>
</gene>
<proteinExistence type="inferred from homology"/>
<name>RL15_LEPCP</name>
<dbReference type="EMBL" id="CP001013">
    <property type="protein sequence ID" value="ACB36184.1"/>
    <property type="molecule type" value="Genomic_DNA"/>
</dbReference>
<dbReference type="RefSeq" id="WP_012348929.1">
    <property type="nucleotide sequence ID" value="NC_010524.1"/>
</dbReference>
<dbReference type="SMR" id="B1Y8B8"/>
<dbReference type="STRING" id="395495.Lcho_3930"/>
<dbReference type="KEGG" id="lch:Lcho_3930"/>
<dbReference type="eggNOG" id="COG0200">
    <property type="taxonomic scope" value="Bacteria"/>
</dbReference>
<dbReference type="HOGENOM" id="CLU_055188_4_2_4"/>
<dbReference type="OrthoDB" id="9810293at2"/>
<dbReference type="Proteomes" id="UP000001693">
    <property type="component" value="Chromosome"/>
</dbReference>
<dbReference type="GO" id="GO:0022625">
    <property type="term" value="C:cytosolic large ribosomal subunit"/>
    <property type="evidence" value="ECO:0007669"/>
    <property type="project" value="TreeGrafter"/>
</dbReference>
<dbReference type="GO" id="GO:0019843">
    <property type="term" value="F:rRNA binding"/>
    <property type="evidence" value="ECO:0007669"/>
    <property type="project" value="UniProtKB-UniRule"/>
</dbReference>
<dbReference type="GO" id="GO:0003735">
    <property type="term" value="F:structural constituent of ribosome"/>
    <property type="evidence" value="ECO:0007669"/>
    <property type="project" value="InterPro"/>
</dbReference>
<dbReference type="GO" id="GO:0006412">
    <property type="term" value="P:translation"/>
    <property type="evidence" value="ECO:0007669"/>
    <property type="project" value="UniProtKB-UniRule"/>
</dbReference>
<dbReference type="Gene3D" id="3.100.10.10">
    <property type="match status" value="1"/>
</dbReference>
<dbReference type="HAMAP" id="MF_01341">
    <property type="entry name" value="Ribosomal_uL15"/>
    <property type="match status" value="1"/>
</dbReference>
<dbReference type="InterPro" id="IPR030878">
    <property type="entry name" value="Ribosomal_uL15"/>
</dbReference>
<dbReference type="InterPro" id="IPR021131">
    <property type="entry name" value="Ribosomal_uL15/eL18"/>
</dbReference>
<dbReference type="InterPro" id="IPR036227">
    <property type="entry name" value="Ribosomal_uL15/eL18_sf"/>
</dbReference>
<dbReference type="InterPro" id="IPR005749">
    <property type="entry name" value="Ribosomal_uL15_bac-type"/>
</dbReference>
<dbReference type="NCBIfam" id="TIGR01071">
    <property type="entry name" value="rplO_bact"/>
    <property type="match status" value="1"/>
</dbReference>
<dbReference type="PANTHER" id="PTHR12934">
    <property type="entry name" value="50S RIBOSOMAL PROTEIN L15"/>
    <property type="match status" value="1"/>
</dbReference>
<dbReference type="PANTHER" id="PTHR12934:SF11">
    <property type="entry name" value="LARGE RIBOSOMAL SUBUNIT PROTEIN UL15M"/>
    <property type="match status" value="1"/>
</dbReference>
<dbReference type="Pfam" id="PF00828">
    <property type="entry name" value="Ribosomal_L27A"/>
    <property type="match status" value="1"/>
</dbReference>
<dbReference type="SUPFAM" id="SSF52080">
    <property type="entry name" value="Ribosomal proteins L15p and L18e"/>
    <property type="match status" value="1"/>
</dbReference>
<protein>
    <recommendedName>
        <fullName evidence="1">Large ribosomal subunit protein uL15</fullName>
    </recommendedName>
    <alternativeName>
        <fullName evidence="3">50S ribosomal protein L15</fullName>
    </alternativeName>
</protein>
<reference key="1">
    <citation type="submission" date="2008-03" db="EMBL/GenBank/DDBJ databases">
        <title>Complete sequence of Leptothrix cholodnii SP-6.</title>
        <authorList>
            <consortium name="US DOE Joint Genome Institute"/>
            <person name="Copeland A."/>
            <person name="Lucas S."/>
            <person name="Lapidus A."/>
            <person name="Glavina del Rio T."/>
            <person name="Dalin E."/>
            <person name="Tice H."/>
            <person name="Bruce D."/>
            <person name="Goodwin L."/>
            <person name="Pitluck S."/>
            <person name="Chertkov O."/>
            <person name="Brettin T."/>
            <person name="Detter J.C."/>
            <person name="Han C."/>
            <person name="Kuske C.R."/>
            <person name="Schmutz J."/>
            <person name="Larimer F."/>
            <person name="Land M."/>
            <person name="Hauser L."/>
            <person name="Kyrpides N."/>
            <person name="Lykidis A."/>
            <person name="Emerson D."/>
            <person name="Richardson P."/>
        </authorList>
    </citation>
    <scope>NUCLEOTIDE SEQUENCE [LARGE SCALE GENOMIC DNA]</scope>
    <source>
        <strain>ATCC 51168 / LMG 8142 / SP-6</strain>
    </source>
</reference>
<feature type="chain" id="PRO_1000142835" description="Large ribosomal subunit protein uL15">
    <location>
        <begin position="1"/>
        <end position="144"/>
    </location>
</feature>
<feature type="region of interest" description="Disordered" evidence="2">
    <location>
        <begin position="1"/>
        <end position="51"/>
    </location>
</feature>
<feature type="compositionally biased region" description="Gly residues" evidence="2">
    <location>
        <begin position="21"/>
        <end position="31"/>
    </location>
</feature>
<keyword id="KW-1185">Reference proteome</keyword>
<keyword id="KW-0687">Ribonucleoprotein</keyword>
<keyword id="KW-0689">Ribosomal protein</keyword>
<keyword id="KW-0694">RNA-binding</keyword>
<keyword id="KW-0699">rRNA-binding</keyword>
<sequence length="144" mass="14882">MELNSIKPGSGSKHAKRRVGRGIGSGLGKTAGRGHKGQKSRAGGYHKVGFEGGQMPLQRRLPKRGFKSHLLKFNAEITLGQLQVLAVDEVDLLLLKQIGLVGELAKVVKVVKSGELTRAVVLKGIGATAGAKAAIEAAGGSLAA</sequence>
<organism>
    <name type="scientific">Leptothrix cholodnii (strain ATCC 51168 / LMG 8142 / SP-6)</name>
    <name type="common">Leptothrix discophora (strain SP-6)</name>
    <dbReference type="NCBI Taxonomy" id="395495"/>
    <lineage>
        <taxon>Bacteria</taxon>
        <taxon>Pseudomonadati</taxon>
        <taxon>Pseudomonadota</taxon>
        <taxon>Betaproteobacteria</taxon>
        <taxon>Burkholderiales</taxon>
        <taxon>Sphaerotilaceae</taxon>
        <taxon>Leptothrix</taxon>
    </lineage>
</organism>
<evidence type="ECO:0000255" key="1">
    <source>
        <dbReference type="HAMAP-Rule" id="MF_01341"/>
    </source>
</evidence>
<evidence type="ECO:0000256" key="2">
    <source>
        <dbReference type="SAM" id="MobiDB-lite"/>
    </source>
</evidence>
<evidence type="ECO:0000305" key="3"/>
<accession>B1Y8B8</accession>
<comment type="function">
    <text evidence="1">Binds to the 23S rRNA.</text>
</comment>
<comment type="subunit">
    <text evidence="1">Part of the 50S ribosomal subunit.</text>
</comment>
<comment type="similarity">
    <text evidence="1">Belongs to the universal ribosomal protein uL15 family.</text>
</comment>